<protein>
    <recommendedName>
        <fullName>Cell division ATP-binding protein FtsE</fullName>
    </recommendedName>
</protein>
<sequence length="230" mass="25728">MMITLDHVTKQYKSSARPALDDINVKIDKGEFVFLIGPSGSGKSTFMRLLLAAETPTSGDVRVSKFHVNKLRGRHVPKLRQVIGCVFQDFRLLQQKTVYDNVAFALEVIGKRTDAINRVVPEVLETVGLSGKANRLPDELSGGEQQRVAIARAFVNRPLVLLADEPTGNLDPETSRDIMDLLERINRTGTTVLMATHDHHIVDSMRQRVVELSLGRLVRDEQRGVYGMDR</sequence>
<dbReference type="EMBL" id="AL123456">
    <property type="protein sequence ID" value="CCP45912.1"/>
    <property type="status" value="ALT_INIT"/>
    <property type="molecule type" value="Genomic_DNA"/>
</dbReference>
<dbReference type="EMBL" id="CP003248">
    <property type="protein sequence ID" value="AFN51094.1"/>
    <property type="status" value="ALT_INIT"/>
    <property type="molecule type" value="Genomic_DNA"/>
</dbReference>
<dbReference type="EMBL" id="JLDD01000038">
    <property type="protein sequence ID" value="KBJ29148.1"/>
    <property type="status" value="ALT_INIT"/>
    <property type="molecule type" value="Genomic_DNA"/>
</dbReference>
<dbReference type="EMBL" id="X70031">
    <property type="protein sequence ID" value="CAA49619.1"/>
    <property type="molecule type" value="Genomic_DNA"/>
</dbReference>
<dbReference type="RefSeq" id="NP_217618.1">
    <property type="nucleotide sequence ID" value="NC_000962.3"/>
</dbReference>
<dbReference type="PDB" id="8IDB">
    <property type="method" value="EM"/>
    <property type="resolution" value="3.90 A"/>
    <property type="chains" value="A/B=1-230"/>
</dbReference>
<dbReference type="PDB" id="8IDC">
    <property type="method" value="EM"/>
    <property type="resolution" value="3.90 A"/>
    <property type="chains" value="A/B=1-230"/>
</dbReference>
<dbReference type="PDB" id="8IDD">
    <property type="method" value="EM"/>
    <property type="resolution" value="4.00 A"/>
    <property type="chains" value="A/B=1-230"/>
</dbReference>
<dbReference type="PDB" id="8IGQ">
    <property type="method" value="EM"/>
    <property type="resolution" value="5.70 A"/>
    <property type="chains" value="A/B=1-230"/>
</dbReference>
<dbReference type="PDB" id="8JIA">
    <property type="method" value="EM"/>
    <property type="resolution" value="3.90 A"/>
    <property type="chains" value="A/B=1-230"/>
</dbReference>
<dbReference type="PDBsum" id="8IDB"/>
<dbReference type="PDBsum" id="8IDC"/>
<dbReference type="PDBsum" id="8IDD"/>
<dbReference type="PDBsum" id="8IGQ"/>
<dbReference type="PDBsum" id="8JIA"/>
<dbReference type="EMDB" id="EMD-35362"/>
<dbReference type="EMDB" id="EMD-35363"/>
<dbReference type="EMDB" id="EMD-35364"/>
<dbReference type="EMDB" id="EMD-35437"/>
<dbReference type="EMDB" id="EMD-36304"/>
<dbReference type="SMR" id="O05779"/>
<dbReference type="FunCoup" id="O05779">
    <property type="interactions" value="116"/>
</dbReference>
<dbReference type="STRING" id="83332.Rv3102c"/>
<dbReference type="PaxDb" id="83332-Rv3102c"/>
<dbReference type="DNASU" id="888672"/>
<dbReference type="GeneID" id="888672"/>
<dbReference type="KEGG" id="mtu:Rv3102c"/>
<dbReference type="KEGG" id="mtv:RVBD_3102c"/>
<dbReference type="PATRIC" id="fig|83332.111.peg.3456"/>
<dbReference type="TubercuList" id="Rv3102c"/>
<dbReference type="eggNOG" id="COG2884">
    <property type="taxonomic scope" value="Bacteria"/>
</dbReference>
<dbReference type="HOGENOM" id="CLU_000604_1_22_11"/>
<dbReference type="InParanoid" id="O05779"/>
<dbReference type="OrthoDB" id="9802264at2"/>
<dbReference type="Proteomes" id="UP000001584">
    <property type="component" value="Chromosome"/>
</dbReference>
<dbReference type="GO" id="GO:0005886">
    <property type="term" value="C:plasma membrane"/>
    <property type="evidence" value="ECO:0000314"/>
    <property type="project" value="MTBBASE"/>
</dbReference>
<dbReference type="GO" id="GO:0005524">
    <property type="term" value="F:ATP binding"/>
    <property type="evidence" value="ECO:0000314"/>
    <property type="project" value="MTBBASE"/>
</dbReference>
<dbReference type="GO" id="GO:0016887">
    <property type="term" value="F:ATP hydrolysis activity"/>
    <property type="evidence" value="ECO:0000314"/>
    <property type="project" value="MTBBASE"/>
</dbReference>
<dbReference type="GO" id="GO:0000287">
    <property type="term" value="F:magnesium ion binding"/>
    <property type="evidence" value="ECO:0000314"/>
    <property type="project" value="MTBBASE"/>
</dbReference>
<dbReference type="GO" id="GO:0030145">
    <property type="term" value="F:manganese ion binding"/>
    <property type="evidence" value="ECO:0000314"/>
    <property type="project" value="MTBBASE"/>
</dbReference>
<dbReference type="GO" id="GO:0022857">
    <property type="term" value="F:transmembrane transporter activity"/>
    <property type="evidence" value="ECO:0000318"/>
    <property type="project" value="GO_Central"/>
</dbReference>
<dbReference type="GO" id="GO:0051301">
    <property type="term" value="P:cell division"/>
    <property type="evidence" value="ECO:0007669"/>
    <property type="project" value="UniProtKB-KW"/>
</dbReference>
<dbReference type="GO" id="GO:0055085">
    <property type="term" value="P:transmembrane transport"/>
    <property type="evidence" value="ECO:0000318"/>
    <property type="project" value="GO_Central"/>
</dbReference>
<dbReference type="FunFam" id="3.40.50.300:FF:000056">
    <property type="entry name" value="Cell division ATP-binding protein FtsE"/>
    <property type="match status" value="1"/>
</dbReference>
<dbReference type="Gene3D" id="3.40.50.300">
    <property type="entry name" value="P-loop containing nucleotide triphosphate hydrolases"/>
    <property type="match status" value="1"/>
</dbReference>
<dbReference type="InterPro" id="IPR003593">
    <property type="entry name" value="AAA+_ATPase"/>
</dbReference>
<dbReference type="InterPro" id="IPR003439">
    <property type="entry name" value="ABC_transporter-like_ATP-bd"/>
</dbReference>
<dbReference type="InterPro" id="IPR017871">
    <property type="entry name" value="ABC_transporter-like_CS"/>
</dbReference>
<dbReference type="InterPro" id="IPR015854">
    <property type="entry name" value="ABC_transpr_LolD-like"/>
</dbReference>
<dbReference type="InterPro" id="IPR005286">
    <property type="entry name" value="Cell_div_FtsE"/>
</dbReference>
<dbReference type="InterPro" id="IPR027417">
    <property type="entry name" value="P-loop_NTPase"/>
</dbReference>
<dbReference type="NCBIfam" id="TIGR02673">
    <property type="entry name" value="FtsE"/>
    <property type="match status" value="1"/>
</dbReference>
<dbReference type="PANTHER" id="PTHR24220:SF470">
    <property type="entry name" value="CELL DIVISION ATP-BINDING PROTEIN FTSE"/>
    <property type="match status" value="1"/>
</dbReference>
<dbReference type="PANTHER" id="PTHR24220">
    <property type="entry name" value="IMPORT ATP-BINDING PROTEIN"/>
    <property type="match status" value="1"/>
</dbReference>
<dbReference type="Pfam" id="PF00005">
    <property type="entry name" value="ABC_tran"/>
    <property type="match status" value="1"/>
</dbReference>
<dbReference type="SMART" id="SM00382">
    <property type="entry name" value="AAA"/>
    <property type="match status" value="1"/>
</dbReference>
<dbReference type="SUPFAM" id="SSF52540">
    <property type="entry name" value="P-loop containing nucleoside triphosphate hydrolases"/>
    <property type="match status" value="1"/>
</dbReference>
<dbReference type="PROSITE" id="PS00211">
    <property type="entry name" value="ABC_TRANSPORTER_1"/>
    <property type="match status" value="1"/>
</dbReference>
<dbReference type="PROSITE" id="PS50893">
    <property type="entry name" value="ABC_TRANSPORTER_2"/>
    <property type="match status" value="1"/>
</dbReference>
<name>FTSE_MYCTU</name>
<keyword id="KW-0002">3D-structure</keyword>
<keyword id="KW-0067">ATP-binding</keyword>
<keyword id="KW-0131">Cell cycle</keyword>
<keyword id="KW-0132">Cell division</keyword>
<keyword id="KW-1003">Cell membrane</keyword>
<keyword id="KW-0378">Hydrolase</keyword>
<keyword id="KW-0472">Membrane</keyword>
<keyword id="KW-0547">Nucleotide-binding</keyword>
<keyword id="KW-1185">Reference proteome</keyword>
<reference key="1">
    <citation type="journal article" date="1998" name="Nature">
        <title>Deciphering the biology of Mycobacterium tuberculosis from the complete genome sequence.</title>
        <authorList>
            <person name="Cole S.T."/>
            <person name="Brosch R."/>
            <person name="Parkhill J."/>
            <person name="Garnier T."/>
            <person name="Churcher C.M."/>
            <person name="Harris D.E."/>
            <person name="Gordon S.V."/>
            <person name="Eiglmeier K."/>
            <person name="Gas S."/>
            <person name="Barry C.E. III"/>
            <person name="Tekaia F."/>
            <person name="Badcock K."/>
            <person name="Basham D."/>
            <person name="Brown D."/>
            <person name="Chillingworth T."/>
            <person name="Connor R."/>
            <person name="Davies R.M."/>
            <person name="Devlin K."/>
            <person name="Feltwell T."/>
            <person name="Gentles S."/>
            <person name="Hamlin N."/>
            <person name="Holroyd S."/>
            <person name="Hornsby T."/>
            <person name="Jagels K."/>
            <person name="Krogh A."/>
            <person name="McLean J."/>
            <person name="Moule S."/>
            <person name="Murphy L.D."/>
            <person name="Oliver S."/>
            <person name="Osborne J."/>
            <person name="Quail M.A."/>
            <person name="Rajandream M.A."/>
            <person name="Rogers J."/>
            <person name="Rutter S."/>
            <person name="Seeger K."/>
            <person name="Skelton S."/>
            <person name="Squares S."/>
            <person name="Squares R."/>
            <person name="Sulston J.E."/>
            <person name="Taylor K."/>
            <person name="Whitehead S."/>
            <person name="Barrell B.G."/>
        </authorList>
    </citation>
    <scope>NUCLEOTIDE SEQUENCE [LARGE SCALE GENOMIC DNA]</scope>
    <source>
        <strain>ATCC 25618 / H37Rv</strain>
    </source>
</reference>
<reference key="2">
    <citation type="submission" date="2013-11" db="EMBL/GenBank/DDBJ databases">
        <title>The genome sequence of Mycobacterium tuberculosis H37Rv.</title>
        <authorList>
            <consortium name="The Broad Institute Genome Sequencing Platform"/>
            <person name="Galagan J."/>
            <person name="Kreiswirth B."/>
            <person name="Dobos K."/>
            <person name="Fortune S."/>
            <person name="Fitzgerald M."/>
            <person name="Young S.K."/>
            <person name="Zeng Q."/>
            <person name="Gargeya S."/>
            <person name="Abouelleil A."/>
            <person name="Alvarado L."/>
            <person name="Berlin A.M."/>
            <person name="Chapman S.B."/>
            <person name="Gainer-Dewar J."/>
            <person name="Goldberg J."/>
            <person name="Gnerre S."/>
            <person name="Griggs A."/>
            <person name="Gujja S."/>
            <person name="Hansen M."/>
            <person name="Howarth C."/>
            <person name="Imamovic A."/>
            <person name="Larimer J."/>
            <person name="McCowan C."/>
            <person name="Murphy C."/>
            <person name="Pearson M."/>
            <person name="Poon T."/>
            <person name="Priest M."/>
            <person name="Roberts A."/>
            <person name="Saif S."/>
            <person name="Shea T."/>
            <person name="Sykes S."/>
            <person name="Wortman J."/>
            <person name="Nusbaum C."/>
            <person name="Birren B."/>
        </authorList>
    </citation>
    <scope>NUCLEOTIDE SEQUENCE [LARGE SCALE GENOMIC DNA]</scope>
    <source>
        <strain>ATCC 25618 / H37Rv</strain>
    </source>
</reference>
<reference key="3">
    <citation type="submission" date="2014-04" db="EMBL/GenBank/DDBJ databases">
        <title>The genome sequence of Mycobacterium tuberculosis H37Rv.</title>
        <authorList>
            <consortium name="The Broad Institute Genomics Platform"/>
            <consortium name="The Broad Institute Genome Sequencing Center for Infectious Disease"/>
            <person name="Earl A.M."/>
            <person name="Kreiswirth B."/>
            <person name="Gomez J."/>
            <person name="Victor T."/>
            <person name="Desjardins C."/>
            <person name="Abeel T."/>
            <person name="Young S."/>
            <person name="Zeng Q."/>
            <person name="Gargeya S."/>
            <person name="Abouelleil A."/>
            <person name="Alvarado L."/>
            <person name="Chapman S.B."/>
            <person name="Gainer-Dewar J."/>
            <person name="Goldberg J."/>
            <person name="Griggs A."/>
            <person name="Gujja S."/>
            <person name="Hansen M."/>
            <person name="Howarth C."/>
            <person name="Imamovic A."/>
            <person name="Larimer J."/>
            <person name="Murphy C."/>
            <person name="Naylor J."/>
            <person name="Pearson M."/>
            <person name="Poon T.W."/>
            <person name="Priest M."/>
            <person name="Roberts A."/>
            <person name="Saif S."/>
            <person name="Shea T."/>
            <person name="Sykes S."/>
            <person name="Wortman J."/>
            <person name="Nusbaum C."/>
            <person name="Birren B."/>
        </authorList>
    </citation>
    <scope>NUCLEOTIDE SEQUENCE [LARGE SCALE GENOMIC DNA]</scope>
    <source>
        <strain>ATCC 25618 / H37Rv</strain>
    </source>
</reference>
<reference key="4">
    <citation type="journal article" date="1996" name="Gene">
        <title>An M. tuberculosis DNA fragment contains genes encoding cell division proteins ftsX and ftsE, a basic protein and homologues of PemK and small protein B.</title>
        <authorList>
            <person name="Tyagi J.S."/>
            <person name="Das T.K."/>
            <person name="Kinger A.K."/>
        </authorList>
    </citation>
    <scope>NUCLEOTIDE SEQUENCE [GENOMIC DNA] OF 36-230</scope>
    <source>
        <strain>ATCC 25618 / H37Rv</strain>
    </source>
</reference>
<reference key="5">
    <citation type="journal article" date="2011" name="Mol. Cell. Proteomics">
        <title>Proteogenomic analysis of Mycobacterium tuberculosis by high resolution mass spectrometry.</title>
        <authorList>
            <person name="Kelkar D.S."/>
            <person name="Kumar D."/>
            <person name="Kumar P."/>
            <person name="Balakrishnan L."/>
            <person name="Muthusamy B."/>
            <person name="Yadav A.K."/>
            <person name="Shrivastava P."/>
            <person name="Marimuthu A."/>
            <person name="Anand S."/>
            <person name="Sundaram H."/>
            <person name="Kingsbury R."/>
            <person name="Harsha H.C."/>
            <person name="Nair B."/>
            <person name="Prasad T.S."/>
            <person name="Chauhan D.S."/>
            <person name="Katoch K."/>
            <person name="Katoch V.M."/>
            <person name="Kumar P."/>
            <person name="Chaerkady R."/>
            <person name="Ramachandran S."/>
            <person name="Dash D."/>
            <person name="Pandey A."/>
        </authorList>
    </citation>
    <scope>IDENTIFICATION BY MASS SPECTROMETRY [LARGE SCALE ANALYSIS]</scope>
    <source>
        <strain>ATCC 25618 / H37Rv</strain>
    </source>
</reference>
<organism>
    <name type="scientific">Mycobacterium tuberculosis (strain ATCC 25618 / H37Rv)</name>
    <dbReference type="NCBI Taxonomy" id="83332"/>
    <lineage>
        <taxon>Bacteria</taxon>
        <taxon>Bacillati</taxon>
        <taxon>Actinomycetota</taxon>
        <taxon>Actinomycetes</taxon>
        <taxon>Mycobacteriales</taxon>
        <taxon>Mycobacteriaceae</taxon>
        <taxon>Mycobacterium</taxon>
        <taxon>Mycobacterium tuberculosis complex</taxon>
    </lineage>
</organism>
<proteinExistence type="evidence at protein level"/>
<comment type="function">
    <text evidence="1 2">Part of the ABC transporter FtsEX involved in cellular division. Has ATPase activity.</text>
</comment>
<comment type="subunit">
    <text evidence="1">Homodimer. Forms a membrane-associated complex with FtsX.</text>
</comment>
<comment type="subcellular location">
    <subcellularLocation>
        <location evidence="1">Cell membrane</location>
        <topology evidence="1">Peripheral membrane protein</topology>
        <orientation evidence="1">Cytoplasmic side</orientation>
    </subcellularLocation>
    <text evidence="1">Associated with the membrane through an interaction with FtsX.</text>
</comment>
<comment type="similarity">
    <text evidence="5">Belongs to the ABC transporter superfamily.</text>
</comment>
<comment type="sequence caution">
    <conflict type="erroneous initiation">
        <sequence resource="EMBL-CDS" id="AFN51094"/>
    </conflict>
    <text>Truncated N-terminus.</text>
</comment>
<comment type="sequence caution">
    <conflict type="erroneous initiation">
        <sequence resource="EMBL-CDS" id="CCP45912"/>
    </conflict>
    <text>Truncated N-terminus.</text>
</comment>
<comment type="sequence caution">
    <conflict type="erroneous initiation">
        <sequence resource="EMBL-CDS" id="KBJ29148"/>
    </conflict>
    <text>Truncated N-terminus.</text>
</comment>
<feature type="chain" id="PRO_0000432514" description="Cell division ATP-binding protein FtsE">
    <location>
        <begin position="1"/>
        <end position="230"/>
    </location>
</feature>
<feature type="domain" description="ABC transporter" evidence="3">
    <location>
        <begin position="3"/>
        <end position="228"/>
    </location>
</feature>
<feature type="binding site" evidence="3">
    <location>
        <begin position="37"/>
        <end position="44"/>
    </location>
    <ligand>
        <name>ATP</name>
        <dbReference type="ChEBI" id="CHEBI:30616"/>
    </ligand>
</feature>
<feature type="sequence conflict" description="In Ref. 4; CAA49619." evidence="5" ref="4">
    <original>IG</original>
    <variation>DR</variation>
    <location>
        <begin position="36"/>
        <end position="37"/>
    </location>
</feature>
<feature type="sequence conflict" description="In Ref. 4; CAA49619." evidence="5" ref="4">
    <original>YD</original>
    <variation>SH</variation>
    <location>
        <begin position="99"/>
        <end position="100"/>
    </location>
</feature>
<feature type="sequence conflict" description="In Ref. 4; CAA49619." evidence="5" ref="4">
    <original>A</original>
    <variation>E</variation>
    <location>
        <position position="115"/>
    </location>
</feature>
<gene>
    <name evidence="4" type="primary">ftsE</name>
    <name evidence="7" type="ordered locus">Rv3102c</name>
    <name evidence="6" type="ordered locus">RVBD_3102c</name>
    <name evidence="8" type="ORF">P425_03233</name>
</gene>
<accession>O05779</accession>
<accession>F2GNW5</accession>
<accession>I6XG74</accession>
<accession>P96292</accession>
<accession>Q7D645</accession>
<evidence type="ECO:0000250" key="1">
    <source>
        <dbReference type="UniProtKB" id="A5U7B7"/>
    </source>
</evidence>
<evidence type="ECO:0000250" key="2">
    <source>
        <dbReference type="UniProtKB" id="P0A9R7"/>
    </source>
</evidence>
<evidence type="ECO:0000255" key="3">
    <source>
        <dbReference type="PROSITE-ProRule" id="PRU00434"/>
    </source>
</evidence>
<evidence type="ECO:0000303" key="4">
    <source>
    </source>
</evidence>
<evidence type="ECO:0000305" key="5"/>
<evidence type="ECO:0000312" key="6">
    <source>
        <dbReference type="EMBL" id="AFN51094.1"/>
    </source>
</evidence>
<evidence type="ECO:0000312" key="7">
    <source>
        <dbReference type="EMBL" id="CCP45912.1"/>
    </source>
</evidence>
<evidence type="ECO:0000312" key="8">
    <source>
        <dbReference type="EMBL" id="KBJ29148.1"/>
    </source>
</evidence>